<feature type="chain" id="PRO_0000097428" description="Retinitis pigmentosa 9 protein">
    <location>
        <begin position="1"/>
        <end position="221"/>
    </location>
</feature>
<feature type="zinc finger region" description="CCHC-type">
    <location>
        <begin position="104"/>
        <end position="122"/>
    </location>
</feature>
<feature type="region of interest" description="PIM1-binding" evidence="1">
    <location>
        <begin position="1"/>
        <end position="155"/>
    </location>
</feature>
<feature type="region of interest" description="Disordered" evidence="3">
    <location>
        <begin position="1"/>
        <end position="76"/>
    </location>
</feature>
<feature type="region of interest" description="Disordered" evidence="3">
    <location>
        <begin position="147"/>
        <end position="221"/>
    </location>
</feature>
<feature type="compositionally biased region" description="Basic and acidic residues" evidence="3">
    <location>
        <begin position="1"/>
        <end position="10"/>
    </location>
</feature>
<feature type="compositionally biased region" description="Basic and acidic residues" evidence="3">
    <location>
        <begin position="17"/>
        <end position="29"/>
    </location>
</feature>
<feature type="compositionally biased region" description="Basic and acidic residues" evidence="3">
    <location>
        <begin position="60"/>
        <end position="69"/>
    </location>
</feature>
<feature type="compositionally biased region" description="Basic and acidic residues" evidence="3">
    <location>
        <begin position="147"/>
        <end position="156"/>
    </location>
</feature>
<feature type="compositionally biased region" description="Basic residues" evidence="3">
    <location>
        <begin position="184"/>
        <end position="212"/>
    </location>
</feature>
<feature type="modified residue" description="Phosphoserine; by PIM1" evidence="2">
    <location>
        <position position="212"/>
    </location>
</feature>
<feature type="modified residue" description="Phosphoserine; by PIM1" evidence="2">
    <location>
        <position position="214"/>
    </location>
</feature>
<feature type="cross-link" description="Glycyl lysine isopeptide (Lys-Gly) (interchain with G-Cter in SUMO2)" evidence="5">
    <location>
        <position position="129"/>
    </location>
</feature>
<feature type="sequence variant" id="VAR_017252" description="In RP9; dbSNP:rs104894037." evidence="4">
    <original>H</original>
    <variation>L</variation>
    <location>
        <position position="137"/>
    </location>
</feature>
<feature type="sequence variant" id="VAR_017253" description="In RP9; dbSNP:rs104894039." evidence="4">
    <original>D</original>
    <variation>G</variation>
    <location>
        <position position="170"/>
    </location>
</feature>
<feature type="sequence variant" id="VAR_017254" description="In dbSNP:rs150987618." evidence="4">
    <original>K</original>
    <variation>R</variation>
    <location>
        <position position="210"/>
    </location>
</feature>
<proteinExistence type="evidence at protein level"/>
<dbReference type="EMBL" id="AX016710">
    <property type="status" value="NOT_ANNOTATED_CDS"/>
    <property type="molecule type" value="mRNA"/>
</dbReference>
<dbReference type="EMBL" id="BC025928">
    <property type="protein sequence ID" value="AAH25928.2"/>
    <property type="molecule type" value="mRNA"/>
</dbReference>
<dbReference type="CCDS" id="CCDS5440.1"/>
<dbReference type="RefSeq" id="NP_976033.1">
    <property type="nucleotide sequence ID" value="NM_203288.2"/>
</dbReference>
<dbReference type="BioGRID" id="112027">
    <property type="interactions" value="102"/>
</dbReference>
<dbReference type="FunCoup" id="Q8TA86">
    <property type="interactions" value="167"/>
</dbReference>
<dbReference type="IntAct" id="Q8TA86">
    <property type="interactions" value="72"/>
</dbReference>
<dbReference type="MINT" id="Q8TA86"/>
<dbReference type="STRING" id="9606.ENSP00000297157"/>
<dbReference type="iPTMnet" id="Q8TA86"/>
<dbReference type="PhosphoSitePlus" id="Q8TA86"/>
<dbReference type="BioMuta" id="RP9"/>
<dbReference type="DMDM" id="38372427"/>
<dbReference type="jPOST" id="Q8TA86"/>
<dbReference type="MassIVE" id="Q8TA86"/>
<dbReference type="PaxDb" id="9606-ENSP00000297157"/>
<dbReference type="PeptideAtlas" id="Q8TA86"/>
<dbReference type="ProteomicsDB" id="73839"/>
<dbReference type="Pumba" id="Q8TA86"/>
<dbReference type="Antibodypedia" id="26407">
    <property type="antibodies" value="49 antibodies from 17 providers"/>
</dbReference>
<dbReference type="DNASU" id="6100"/>
<dbReference type="Ensembl" id="ENST00000297157.8">
    <property type="protein sequence ID" value="ENSP00000297157.3"/>
    <property type="gene ID" value="ENSG00000164610.10"/>
</dbReference>
<dbReference type="GeneID" id="6100"/>
<dbReference type="KEGG" id="hsa:6100"/>
<dbReference type="MANE-Select" id="ENST00000297157.8">
    <property type="protein sequence ID" value="ENSP00000297157.3"/>
    <property type="RefSeq nucleotide sequence ID" value="NM_203288.2"/>
    <property type="RefSeq protein sequence ID" value="NP_976033.1"/>
</dbReference>
<dbReference type="UCSC" id="uc003tdm.4">
    <property type="organism name" value="human"/>
</dbReference>
<dbReference type="AGR" id="HGNC:10288"/>
<dbReference type="CTD" id="6100"/>
<dbReference type="DisGeNET" id="6100"/>
<dbReference type="GeneCards" id="RP9"/>
<dbReference type="GeneReviews" id="RP9"/>
<dbReference type="HGNC" id="HGNC:10288">
    <property type="gene designation" value="RP9"/>
</dbReference>
<dbReference type="HPA" id="ENSG00000164610">
    <property type="expression patterns" value="Low tissue specificity"/>
</dbReference>
<dbReference type="MalaCards" id="RP9"/>
<dbReference type="MIM" id="180104">
    <property type="type" value="phenotype"/>
</dbReference>
<dbReference type="MIM" id="607331">
    <property type="type" value="gene"/>
</dbReference>
<dbReference type="neXtProt" id="NX_Q8TA86"/>
<dbReference type="OpenTargets" id="ENSG00000164610"/>
<dbReference type="Orphanet" id="791">
    <property type="disease" value="Retinitis pigmentosa"/>
</dbReference>
<dbReference type="PharmGKB" id="PA34650"/>
<dbReference type="VEuPathDB" id="HostDB:ENSG00000164610"/>
<dbReference type="eggNOG" id="KOG3794">
    <property type="taxonomic scope" value="Eukaryota"/>
</dbReference>
<dbReference type="GeneTree" id="ENSGT00940000162896"/>
<dbReference type="InParanoid" id="Q8TA86"/>
<dbReference type="OMA" id="YEKDMRI"/>
<dbReference type="OrthoDB" id="20809at2759"/>
<dbReference type="PAN-GO" id="Q8TA86">
    <property type="GO annotations" value="0 GO annotations based on evolutionary models"/>
</dbReference>
<dbReference type="PhylomeDB" id="Q8TA86"/>
<dbReference type="TreeFam" id="TF329160"/>
<dbReference type="PathwayCommons" id="Q8TA86"/>
<dbReference type="SignaLink" id="Q8TA86"/>
<dbReference type="SIGNOR" id="Q8TA86"/>
<dbReference type="BioGRID-ORCS" id="6100">
    <property type="hits" value="15 hits in 1161 CRISPR screens"/>
</dbReference>
<dbReference type="ChiTaRS" id="RP9">
    <property type="organism name" value="human"/>
</dbReference>
<dbReference type="GeneWiki" id="RP9"/>
<dbReference type="GenomeRNAi" id="6100"/>
<dbReference type="Pharos" id="Q8TA86">
    <property type="development level" value="Tbio"/>
</dbReference>
<dbReference type="PRO" id="PR:Q8TA86"/>
<dbReference type="Proteomes" id="UP000005640">
    <property type="component" value="Chromosome 7"/>
</dbReference>
<dbReference type="RNAct" id="Q8TA86">
    <property type="molecule type" value="protein"/>
</dbReference>
<dbReference type="Bgee" id="ENSG00000164610">
    <property type="expression patterns" value="Expressed in oocyte and 185 other cell types or tissues"/>
</dbReference>
<dbReference type="ExpressionAtlas" id="Q8TA86">
    <property type="expression patterns" value="baseline and differential"/>
</dbReference>
<dbReference type="GO" id="GO:0005634">
    <property type="term" value="C:nucleus"/>
    <property type="evidence" value="ECO:0007669"/>
    <property type="project" value="UniProtKB-SubCell"/>
</dbReference>
<dbReference type="GO" id="GO:0005785">
    <property type="term" value="C:signal recognition particle receptor complex"/>
    <property type="evidence" value="ECO:0007669"/>
    <property type="project" value="Ensembl"/>
</dbReference>
<dbReference type="GO" id="GO:0003723">
    <property type="term" value="F:RNA binding"/>
    <property type="evidence" value="ECO:0007005"/>
    <property type="project" value="UniProtKB"/>
</dbReference>
<dbReference type="GO" id="GO:0008270">
    <property type="term" value="F:zinc ion binding"/>
    <property type="evidence" value="ECO:0007669"/>
    <property type="project" value="UniProtKB-KW"/>
</dbReference>
<dbReference type="GO" id="GO:0050890">
    <property type="term" value="P:cognition"/>
    <property type="evidence" value="ECO:0000315"/>
    <property type="project" value="UniProtKB"/>
</dbReference>
<dbReference type="GO" id="GO:0008380">
    <property type="term" value="P:RNA splicing"/>
    <property type="evidence" value="ECO:0000304"/>
    <property type="project" value="UniProtKB"/>
</dbReference>
<dbReference type="InterPro" id="IPR034585">
    <property type="entry name" value="PAP-1"/>
</dbReference>
<dbReference type="PANTHER" id="PTHR35252">
    <property type="entry name" value="RETINITIS PIGMENTOSA 9 PROTEIN"/>
    <property type="match status" value="1"/>
</dbReference>
<dbReference type="PANTHER" id="PTHR35252:SF1">
    <property type="entry name" value="RETINITIS PIGMENTOSA 9 PROTEIN"/>
    <property type="match status" value="1"/>
</dbReference>
<name>RP9_HUMAN</name>
<evidence type="ECO:0000250" key="1"/>
<evidence type="ECO:0000250" key="2">
    <source>
        <dbReference type="UniProtKB" id="P97762"/>
    </source>
</evidence>
<evidence type="ECO:0000256" key="3">
    <source>
        <dbReference type="SAM" id="MobiDB-lite"/>
    </source>
</evidence>
<evidence type="ECO:0000269" key="4">
    <source>
    </source>
</evidence>
<evidence type="ECO:0007744" key="5">
    <source>
    </source>
</evidence>
<organism>
    <name type="scientific">Homo sapiens</name>
    <name type="common">Human</name>
    <dbReference type="NCBI Taxonomy" id="9606"/>
    <lineage>
        <taxon>Eukaryota</taxon>
        <taxon>Metazoa</taxon>
        <taxon>Chordata</taxon>
        <taxon>Craniata</taxon>
        <taxon>Vertebrata</taxon>
        <taxon>Euteleostomi</taxon>
        <taxon>Mammalia</taxon>
        <taxon>Eutheria</taxon>
        <taxon>Euarchontoglires</taxon>
        <taxon>Primates</taxon>
        <taxon>Haplorrhini</taxon>
        <taxon>Catarrhini</taxon>
        <taxon>Hominidae</taxon>
        <taxon>Homo</taxon>
    </lineage>
</organism>
<reference key="1">
    <citation type="patent" date="1999-09-30" number="WO9949030">
        <title>Compounds related to PAP-1.</title>
        <authorList>
            <person name="Bruck C.E."/>
            <person name="Coche T."/>
            <person name="Cassart J.-P."/>
            <person name="Vinals-Bassols C."/>
        </authorList>
    </citation>
    <scope>NUCLEOTIDE SEQUENCE [MRNA]</scope>
</reference>
<reference key="2">
    <citation type="journal article" date="2004" name="Genome Res.">
        <title>The status, quality, and expansion of the NIH full-length cDNA project: the Mammalian Gene Collection (MGC).</title>
        <authorList>
            <consortium name="The MGC Project Team"/>
        </authorList>
    </citation>
    <scope>NUCLEOTIDE SEQUENCE [LARGE SCALE MRNA]</scope>
    <source>
        <tissue>Muscle</tissue>
    </source>
</reference>
<reference key="3">
    <citation type="journal article" date="2004" name="Gene">
        <title>A novel nucleolar protein, PAPA-1, induces growth arrest as a result of cell cycle arrest at the G1 phase.</title>
        <authorList>
            <person name="Kuroda T.S."/>
            <person name="Maita H."/>
            <person name="Tabata T."/>
            <person name="Taira T."/>
            <person name="Kitaura H."/>
            <person name="Ariga H."/>
            <person name="Iguchi-Ariga S.M.M."/>
        </authorList>
    </citation>
    <scope>INTERACTION WITH ZNHIT4</scope>
</reference>
<reference key="4">
    <citation type="journal article" date="2017" name="Nat. Struct. Mol. Biol.">
        <title>Site-specific mapping of the human SUMO proteome reveals co-modification with phosphorylation.</title>
        <authorList>
            <person name="Hendriks I.A."/>
            <person name="Lyon D."/>
            <person name="Young C."/>
            <person name="Jensen L.J."/>
            <person name="Vertegaal A.C."/>
            <person name="Nielsen M.L."/>
        </authorList>
    </citation>
    <scope>SUMOYLATION [LARGE SCALE ANALYSIS] AT LYS-129</scope>
    <scope>IDENTIFICATION BY MASS SPECTROMETRY [LARGE SCALE ANALYSIS]</scope>
</reference>
<reference key="5">
    <citation type="journal article" date="2002" name="Eur. J. Hum. Genet.">
        <title>Mutations in a protein target of the Pim-1 kinase associated with the RP9 form of autosomal dominant retinitis pigmentosa.</title>
        <authorList>
            <person name="Keen T.J."/>
            <person name="Hims M.M."/>
            <person name="McKie A.B."/>
            <person name="Moore A.T."/>
            <person name="Doran R.M."/>
            <person name="Mackey D.A."/>
            <person name="Mansfield D.C."/>
            <person name="Mueller R.F."/>
            <person name="Bhattacharya S.S."/>
            <person name="Bird A.C."/>
            <person name="Markham A.F."/>
            <person name="Inglehearn C.F."/>
        </authorList>
    </citation>
    <scope>VARIANTS RP9 LEU-137 AND GLY-170</scope>
    <scope>VARIANT ARG-210</scope>
</reference>
<accession>Q8TA86</accession>
<comment type="function">
    <text evidence="1">Is thought to be a target protein for the PIM1 kinase. May play some roles in B-cell proliferation in association with PIM1 (By similarity).</text>
</comment>
<comment type="subunit">
    <text evidence="1">Binds to PIM1 (By similarity). Binds to ZNHIT4.</text>
</comment>
<comment type="interaction">
    <interactant intactId="EBI-630339">
        <id>Q8TA86</id>
    </interactant>
    <interactant intactId="EBI-541426">
        <id>Q9BXS5</id>
        <label>AP1M1</label>
    </interactant>
    <organismsDiffer>false</organismsDiffer>
    <experiments>3</experiments>
</comment>
<comment type="interaction">
    <interactant intactId="EBI-630339">
        <id>Q8TA86</id>
    </interactant>
    <interactant intactId="EBI-358049">
        <id>Q13895</id>
        <label>BYSL</label>
    </interactant>
    <organismsDiffer>false</organismsDiffer>
    <experiments>3</experiments>
</comment>
<comment type="interaction">
    <interactant intactId="EBI-630339">
        <id>Q8TA86</id>
    </interactant>
    <interactant intactId="EBI-10699759">
        <id>P61328-2</id>
        <label>FGF12</label>
    </interactant>
    <organismsDiffer>false</organismsDiffer>
    <experiments>3</experiments>
</comment>
<comment type="interaction">
    <interactant intactId="EBI-630339">
        <id>Q8TA86</id>
    </interactant>
    <interactant intactId="EBI-742459">
        <id>Q9BU76</id>
        <label>MMTAG2</label>
    </interactant>
    <organismsDiffer>false</organismsDiffer>
    <experiments>3</experiments>
</comment>
<comment type="interaction">
    <interactant intactId="EBI-630339">
        <id>Q8TA86</id>
    </interactant>
    <interactant intactId="EBI-3920396">
        <id>Q6ZUT1</id>
        <label>NKAPD1</label>
    </interactant>
    <organismsDiffer>false</organismsDiffer>
    <experiments>3</experiments>
</comment>
<comment type="interaction">
    <interactant intactId="EBI-630339">
        <id>Q8TA86</id>
    </interactant>
    <interactant intactId="EBI-727004">
        <id>O00560</id>
        <label>SDCBP</label>
    </interactant>
    <organismsDiffer>false</organismsDiffer>
    <experiments>5</experiments>
</comment>
<comment type="interaction">
    <interactant intactId="EBI-630339">
        <id>Q8TA86</id>
    </interactant>
    <interactant intactId="EBI-10268630">
        <id>Q8N9Q2</id>
        <label>SREK1IP1</label>
    </interactant>
    <organismsDiffer>false</organismsDiffer>
    <experiments>3</experiments>
</comment>
<comment type="subcellular location">
    <subcellularLocation>
        <location evidence="1">Nucleus</location>
    </subcellularLocation>
</comment>
<comment type="tissue specificity">
    <text>Appears to be expressed in a wide range of tissues.</text>
</comment>
<comment type="disease" evidence="4">
    <disease id="DI-00976">
        <name>Retinitis pigmentosa 9</name>
        <acronym>RP9</acronym>
        <description>A retinal dystrophy belonging to the group of pigmentary retinopathies. Retinitis pigmentosa is characterized by retinal pigment deposits visible on fundus examination and primary loss of rod photoreceptor cells followed by secondary loss of cone photoreceptors. Patients typically have night vision blindness and loss of midperipheral visual field. As their condition progresses, they lose their far peripheral visual field and eventually central vision as well.</description>
        <dbReference type="MIM" id="180104"/>
    </disease>
    <text>The disease is caused by variants affecting the gene represented in this entry.</text>
</comment>
<protein>
    <recommendedName>
        <fullName>Retinitis pigmentosa 9 protein</fullName>
    </recommendedName>
    <alternativeName>
        <fullName>Pim-1-associated protein</fullName>
        <shortName>PAP-1</shortName>
    </alternativeName>
</protein>
<gene>
    <name type="primary">RP9</name>
</gene>
<sequence>MSSRPGREDVGAAGARRPREPPEQELQRRREQKRRRHDAQQLQQLKHLESFYEKPPPGLIKEDETKPEDCIPDVPGNEHAREFLAHAPTKGLWMPLGKEVKVMQCWRCKRYGHRTGDKECPFFIKGNQKLEQFRVAHEDPMYDIIRDNKRHEKDVRIQQLKQLLEDSTSDEDRSSSSSSEGKEKHKKKKKKEKHKKRKKEKKKKKKRKHKSSKSNEGSDSE</sequence>
<keyword id="KW-0225">Disease variant</keyword>
<keyword id="KW-1017">Isopeptide bond</keyword>
<keyword id="KW-0479">Metal-binding</keyword>
<keyword id="KW-0539">Nucleus</keyword>
<keyword id="KW-0597">Phosphoprotein</keyword>
<keyword id="KW-1267">Proteomics identification</keyword>
<keyword id="KW-1185">Reference proteome</keyword>
<keyword id="KW-0682">Retinitis pigmentosa</keyword>
<keyword id="KW-0832">Ubl conjugation</keyword>
<keyword id="KW-0862">Zinc</keyword>
<keyword id="KW-0863">Zinc-finger</keyword>